<proteinExistence type="inferred from homology"/>
<evidence type="ECO:0000255" key="1">
    <source>
        <dbReference type="HAMAP-Rule" id="MF_00440"/>
    </source>
</evidence>
<comment type="function">
    <text evidence="1">Negatively regulates transcription of bacterial ribonucleotide reductase nrd genes and operons by binding to NrdR-boxes.</text>
</comment>
<comment type="cofactor">
    <cofactor evidence="1">
        <name>Zn(2+)</name>
        <dbReference type="ChEBI" id="CHEBI:29105"/>
    </cofactor>
    <text evidence="1">Binds 1 zinc ion.</text>
</comment>
<comment type="similarity">
    <text evidence="1">Belongs to the NrdR family.</text>
</comment>
<feature type="chain" id="PRO_0000230855" description="Transcriptional repressor NrdR">
    <location>
        <begin position="1"/>
        <end position="152"/>
    </location>
</feature>
<feature type="domain" description="ATP-cone" evidence="1">
    <location>
        <begin position="49"/>
        <end position="139"/>
    </location>
</feature>
<feature type="zinc finger region" evidence="1">
    <location>
        <begin position="3"/>
        <end position="34"/>
    </location>
</feature>
<protein>
    <recommendedName>
        <fullName evidence="1">Transcriptional repressor NrdR</fullName>
    </recommendedName>
</protein>
<accession>Q65GA0</accession>
<accession>Q62RQ5</accession>
<keyword id="KW-0067">ATP-binding</keyword>
<keyword id="KW-0238">DNA-binding</keyword>
<keyword id="KW-0479">Metal-binding</keyword>
<keyword id="KW-0547">Nucleotide-binding</keyword>
<keyword id="KW-1185">Reference proteome</keyword>
<keyword id="KW-0678">Repressor</keyword>
<keyword id="KW-0804">Transcription</keyword>
<keyword id="KW-0805">Transcription regulation</keyword>
<keyword id="KW-0862">Zinc</keyword>
<keyword id="KW-0863">Zinc-finger</keyword>
<dbReference type="EMBL" id="AE017333">
    <property type="protein sequence ID" value="AAU41914.1"/>
    <property type="molecule type" value="Genomic_DNA"/>
</dbReference>
<dbReference type="EMBL" id="CP000002">
    <property type="protein sequence ID" value="AAU24555.1"/>
    <property type="molecule type" value="Genomic_DNA"/>
</dbReference>
<dbReference type="RefSeq" id="WP_003184292.1">
    <property type="nucleotide sequence ID" value="NC_006322.1"/>
</dbReference>
<dbReference type="SMR" id="Q65GA0"/>
<dbReference type="STRING" id="279010.BL00388"/>
<dbReference type="GeneID" id="92860358"/>
<dbReference type="KEGG" id="bld:BLi03048"/>
<dbReference type="KEGG" id="bli:BL00388"/>
<dbReference type="eggNOG" id="COG1327">
    <property type="taxonomic scope" value="Bacteria"/>
</dbReference>
<dbReference type="HOGENOM" id="CLU_108412_0_0_9"/>
<dbReference type="Proteomes" id="UP000000606">
    <property type="component" value="Chromosome"/>
</dbReference>
<dbReference type="GO" id="GO:0005524">
    <property type="term" value="F:ATP binding"/>
    <property type="evidence" value="ECO:0007669"/>
    <property type="project" value="UniProtKB-KW"/>
</dbReference>
<dbReference type="GO" id="GO:0003677">
    <property type="term" value="F:DNA binding"/>
    <property type="evidence" value="ECO:0007669"/>
    <property type="project" value="UniProtKB-KW"/>
</dbReference>
<dbReference type="GO" id="GO:0008270">
    <property type="term" value="F:zinc ion binding"/>
    <property type="evidence" value="ECO:0007669"/>
    <property type="project" value="UniProtKB-UniRule"/>
</dbReference>
<dbReference type="GO" id="GO:0045892">
    <property type="term" value="P:negative regulation of DNA-templated transcription"/>
    <property type="evidence" value="ECO:0007669"/>
    <property type="project" value="UniProtKB-UniRule"/>
</dbReference>
<dbReference type="HAMAP" id="MF_00440">
    <property type="entry name" value="NrdR"/>
    <property type="match status" value="1"/>
</dbReference>
<dbReference type="InterPro" id="IPR005144">
    <property type="entry name" value="ATP-cone_dom"/>
</dbReference>
<dbReference type="InterPro" id="IPR055173">
    <property type="entry name" value="NrdR-like_N"/>
</dbReference>
<dbReference type="InterPro" id="IPR003796">
    <property type="entry name" value="RNR_NrdR-like"/>
</dbReference>
<dbReference type="NCBIfam" id="TIGR00244">
    <property type="entry name" value="transcriptional regulator NrdR"/>
    <property type="match status" value="1"/>
</dbReference>
<dbReference type="PANTHER" id="PTHR30455">
    <property type="entry name" value="TRANSCRIPTIONAL REPRESSOR NRDR"/>
    <property type="match status" value="1"/>
</dbReference>
<dbReference type="PANTHER" id="PTHR30455:SF2">
    <property type="entry name" value="TRANSCRIPTIONAL REPRESSOR NRDR"/>
    <property type="match status" value="1"/>
</dbReference>
<dbReference type="Pfam" id="PF03477">
    <property type="entry name" value="ATP-cone"/>
    <property type="match status" value="1"/>
</dbReference>
<dbReference type="Pfam" id="PF22811">
    <property type="entry name" value="Zn_ribbon_NrdR"/>
    <property type="match status" value="1"/>
</dbReference>
<dbReference type="PROSITE" id="PS51161">
    <property type="entry name" value="ATP_CONE"/>
    <property type="match status" value="1"/>
</dbReference>
<name>NRDR_BACLD</name>
<sequence>MKCPACQHNGTRVLDSRPVDEGRSIRRRRECESCNYRFTTFEKVEEIPLIVVKKEGIREEFSREKMLRGLIKACEKRPVALKQLEDICFEIEKELRNQGVSEVKSDMIGEMVMDRLAKIDEVAYVRFASVYRQFKDINVFIDELKDLIKKER</sequence>
<organism>
    <name type="scientific">Bacillus licheniformis (strain ATCC 14580 / DSM 13 / JCM 2505 / CCUG 7422 / NBRC 12200 / NCIMB 9375 / NCTC 10341 / NRRL NRS-1264 / Gibson 46)</name>
    <dbReference type="NCBI Taxonomy" id="279010"/>
    <lineage>
        <taxon>Bacteria</taxon>
        <taxon>Bacillati</taxon>
        <taxon>Bacillota</taxon>
        <taxon>Bacilli</taxon>
        <taxon>Bacillales</taxon>
        <taxon>Bacillaceae</taxon>
        <taxon>Bacillus</taxon>
    </lineage>
</organism>
<gene>
    <name evidence="1" type="primary">nrdR</name>
    <name type="ordered locus">BLi03048</name>
    <name type="ordered locus">BL00388</name>
</gene>
<reference key="1">
    <citation type="journal article" date="2004" name="J. Mol. Microbiol. Biotechnol.">
        <title>The complete genome sequence of Bacillus licheniformis DSM13, an organism with great industrial potential.</title>
        <authorList>
            <person name="Veith B."/>
            <person name="Herzberg C."/>
            <person name="Steckel S."/>
            <person name="Feesche J."/>
            <person name="Maurer K.H."/>
            <person name="Ehrenreich P."/>
            <person name="Baeumer S."/>
            <person name="Henne A."/>
            <person name="Liesegang H."/>
            <person name="Merkl R."/>
            <person name="Ehrenreich A."/>
            <person name="Gottschalk G."/>
        </authorList>
    </citation>
    <scope>NUCLEOTIDE SEQUENCE [LARGE SCALE GENOMIC DNA]</scope>
    <source>
        <strain>ATCC 14580 / DSM 13 / JCM 2505 / CCUG 7422 / NBRC 12200 / NCIMB 9375 / NCTC 10341 / NRRL NRS-1264 / Gibson 46</strain>
    </source>
</reference>
<reference key="2">
    <citation type="journal article" date="2004" name="Genome Biol.">
        <title>Complete genome sequence of the industrial bacterium Bacillus licheniformis and comparisons with closely related Bacillus species.</title>
        <authorList>
            <person name="Rey M.W."/>
            <person name="Ramaiya P."/>
            <person name="Nelson B.A."/>
            <person name="Brody-Karpin S.D."/>
            <person name="Zaretsky E.J."/>
            <person name="Tang M."/>
            <person name="Lopez de Leon A."/>
            <person name="Xiang H."/>
            <person name="Gusti V."/>
            <person name="Clausen I.G."/>
            <person name="Olsen P.B."/>
            <person name="Rasmussen M.D."/>
            <person name="Andersen J.T."/>
            <person name="Joergensen P.L."/>
            <person name="Larsen T.S."/>
            <person name="Sorokin A."/>
            <person name="Bolotin A."/>
            <person name="Lapidus A."/>
            <person name="Galleron N."/>
            <person name="Ehrlich S.D."/>
            <person name="Berka R.M."/>
        </authorList>
    </citation>
    <scope>NUCLEOTIDE SEQUENCE [LARGE SCALE GENOMIC DNA]</scope>
    <source>
        <strain>ATCC 14580 / DSM 13 / JCM 2505 / CCUG 7422 / NBRC 12200 / NCIMB 9375 / NCTC 10341 / NRRL NRS-1264 / Gibson 46</strain>
    </source>
</reference>